<reference key="1">
    <citation type="submission" date="1995-12" db="EMBL/GenBank/DDBJ databases">
        <title>The pollen coat of Brassica oleracea contains a thioredoxin h-like protein.</title>
        <authorList>
            <person name="Ruiter R.K."/>
            <person name="Mettenmeyer T."/>
            <person name="Doughty J."/>
            <person name="van Eldik G.J."/>
            <person name="Van Herpen M.M.A."/>
            <person name="Dickinson H.G."/>
            <person name="Schrauwen J.A.M."/>
            <person name="Wullems G.J."/>
        </authorList>
    </citation>
    <scope>NUCLEOTIDE SEQUENCE [MRNA]</scope>
</reference>
<gene>
    <name type="primary">BOPC17</name>
</gene>
<accession>P68176</accession>
<accession>Q42388</accession>
<keyword id="KW-0963">Cytoplasm</keyword>
<keyword id="KW-1015">Disulfide bond</keyword>
<keyword id="KW-0249">Electron transport</keyword>
<keyword id="KW-0676">Redox-active center</keyword>
<keyword id="KW-0813">Transport</keyword>
<name>TRXH_BRAOL</name>
<proteinExistence type="evidence at transcript level"/>
<sequence>MAATAEVIPAGEVIACHTVEDWNNKLKAAKESNKLIVIDFTAVWCPPCRFIAPIFVELAKKHLDVVFFKVDVDELATVAQEFDVQAMPTFVYMKGEEKLDKVVGAAKEEIEAKLLKHSQVAAA</sequence>
<feature type="chain" id="PRO_0000120053" description="Thioredoxin H-type">
    <location>
        <begin position="1"/>
        <end position="123"/>
    </location>
</feature>
<feature type="domain" description="Thioredoxin" evidence="2">
    <location>
        <begin position="2"/>
        <end position="119"/>
    </location>
</feature>
<feature type="disulfide bond" description="Redox-active" evidence="2">
    <location>
        <begin position="45"/>
        <end position="48"/>
    </location>
</feature>
<organism>
    <name type="scientific">Brassica oleracea</name>
    <name type="common">Wild cabbage</name>
    <dbReference type="NCBI Taxonomy" id="3712"/>
    <lineage>
        <taxon>Eukaryota</taxon>
        <taxon>Viridiplantae</taxon>
        <taxon>Streptophyta</taxon>
        <taxon>Embryophyta</taxon>
        <taxon>Tracheophyta</taxon>
        <taxon>Spermatophyta</taxon>
        <taxon>Magnoliopsida</taxon>
        <taxon>eudicotyledons</taxon>
        <taxon>Gunneridae</taxon>
        <taxon>Pentapetalae</taxon>
        <taxon>rosids</taxon>
        <taxon>malvids</taxon>
        <taxon>Brassicales</taxon>
        <taxon>Brassicaceae</taxon>
        <taxon>Brassiceae</taxon>
        <taxon>Brassica</taxon>
    </lineage>
</organism>
<evidence type="ECO:0000250" key="1"/>
<evidence type="ECO:0000255" key="2">
    <source>
        <dbReference type="PROSITE-ProRule" id="PRU00691"/>
    </source>
</evidence>
<evidence type="ECO:0000305" key="3"/>
<protein>
    <recommendedName>
        <fullName>Thioredoxin H-type</fullName>
        <shortName>Trx-H</shortName>
    </recommendedName>
    <alternativeName>
        <fullName>Pollen coat protein</fullName>
    </alternativeName>
</protein>
<comment type="function">
    <text evidence="1">Participates in various redox reactions through the reversible oxidation of the active center dithiol to a disulfide. The H form is known to activate a number of cytosolic enzymes (By similarity).</text>
</comment>
<comment type="subcellular location">
    <subcellularLocation>
        <location evidence="1">Cytoplasm</location>
    </subcellularLocation>
</comment>
<comment type="similarity">
    <text evidence="3">Belongs to the thioredoxin family. Plant H-type subfamily.</text>
</comment>
<dbReference type="EMBL" id="X89759">
    <property type="protein sequence ID" value="CAA61908.1"/>
    <property type="molecule type" value="mRNA"/>
</dbReference>
<dbReference type="SMR" id="P68176"/>
<dbReference type="GO" id="GO:0005829">
    <property type="term" value="C:cytosol"/>
    <property type="evidence" value="ECO:0007669"/>
    <property type="project" value="EnsemblPlants"/>
</dbReference>
<dbReference type="GO" id="GO:0003729">
    <property type="term" value="F:mRNA binding"/>
    <property type="evidence" value="ECO:0007669"/>
    <property type="project" value="EnsemblPlants"/>
</dbReference>
<dbReference type="GO" id="GO:0016671">
    <property type="term" value="F:oxidoreductase activity, acting on a sulfur group of donors, disulfide as acceptor"/>
    <property type="evidence" value="ECO:0007669"/>
    <property type="project" value="EnsemblPlants"/>
</dbReference>
<dbReference type="GO" id="GO:0050832">
    <property type="term" value="P:defense response to fungus"/>
    <property type="evidence" value="ECO:0007669"/>
    <property type="project" value="EnsemblPlants"/>
</dbReference>
<dbReference type="GO" id="GO:0010286">
    <property type="term" value="P:heat acclimation"/>
    <property type="evidence" value="ECO:0007669"/>
    <property type="project" value="EnsemblPlants"/>
</dbReference>
<dbReference type="GO" id="GO:0051259">
    <property type="term" value="P:protein complex oligomerization"/>
    <property type="evidence" value="ECO:0007669"/>
    <property type="project" value="EnsemblPlants"/>
</dbReference>
<dbReference type="GO" id="GO:0006457">
    <property type="term" value="P:protein folding"/>
    <property type="evidence" value="ECO:0007669"/>
    <property type="project" value="EnsemblPlants"/>
</dbReference>
<dbReference type="GO" id="GO:0010188">
    <property type="term" value="P:response to microbial phytotoxin"/>
    <property type="evidence" value="ECO:0007669"/>
    <property type="project" value="EnsemblPlants"/>
</dbReference>
<dbReference type="CDD" id="cd02947">
    <property type="entry name" value="TRX_family"/>
    <property type="match status" value="1"/>
</dbReference>
<dbReference type="FunFam" id="3.40.30.10:FF:000245">
    <property type="entry name" value="Thioredoxin"/>
    <property type="match status" value="1"/>
</dbReference>
<dbReference type="Gene3D" id="3.40.30.10">
    <property type="entry name" value="Glutaredoxin"/>
    <property type="match status" value="1"/>
</dbReference>
<dbReference type="InterPro" id="IPR036249">
    <property type="entry name" value="Thioredoxin-like_sf"/>
</dbReference>
<dbReference type="InterPro" id="IPR017937">
    <property type="entry name" value="Thioredoxin_CS"/>
</dbReference>
<dbReference type="InterPro" id="IPR013766">
    <property type="entry name" value="Thioredoxin_domain"/>
</dbReference>
<dbReference type="InterPro" id="IPR050620">
    <property type="entry name" value="Thioredoxin_H-type-like"/>
</dbReference>
<dbReference type="PANTHER" id="PTHR10438">
    <property type="entry name" value="THIOREDOXIN"/>
    <property type="match status" value="1"/>
</dbReference>
<dbReference type="PANTHER" id="PTHR10438:SF410">
    <property type="entry name" value="THIOREDOXIN H3"/>
    <property type="match status" value="1"/>
</dbReference>
<dbReference type="Pfam" id="PF00085">
    <property type="entry name" value="Thioredoxin"/>
    <property type="match status" value="1"/>
</dbReference>
<dbReference type="PRINTS" id="PR00421">
    <property type="entry name" value="THIOREDOXIN"/>
</dbReference>
<dbReference type="SUPFAM" id="SSF52833">
    <property type="entry name" value="Thioredoxin-like"/>
    <property type="match status" value="1"/>
</dbReference>
<dbReference type="PROSITE" id="PS00194">
    <property type="entry name" value="THIOREDOXIN_1"/>
    <property type="match status" value="1"/>
</dbReference>
<dbReference type="PROSITE" id="PS51352">
    <property type="entry name" value="THIOREDOXIN_2"/>
    <property type="match status" value="1"/>
</dbReference>